<sequence length="371" mass="40782">MIDLRSPNALLSDYVERYAHLSPEPSRQLQQRMDYNVRADAPAEPASKPRWLQSRACTLTPEQALDRAKGALLGLAIGDAVGTTLEFLPRDREHVNDMVGGGPFRLAAGEWTDDTSMALCLADTYVSQGKFDYATYANALVRWYRHGENSVNGRCFDIGNATRNALEGWLREGIGWQGNYDPSTAGNGSIIRLAPTAIFRRHSLSASWWESVTQSSVTHNADEAVNCCQLLAAQLHLALNGADKEETLAPAVRSLRPRPMIINAGEYKQKSRDQIRSSGYVVDTLEAALWAVWNSNNFHDAILLAANLADDADSVAATAGQLAGALYGVSGMPPEWVEKVAWSQHIQKLAQELFDRAPQVDELDALLYGKR</sequence>
<gene>
    <name evidence="3" type="primary">tri1</name>
    <name type="ordered locus">PputGB1_2761</name>
</gene>
<accession>B0KTG8</accession>
<proteinExistence type="evidence at protein level"/>
<keyword id="KW-0378">Hydrolase</keyword>
<keyword id="KW-0460">Magnesium</keyword>
<keyword id="KW-0479">Metal-binding</keyword>
<protein>
    <recommendedName>
        <fullName evidence="4">ADP-ribosylarginine hydrolase Tri1</fullName>
        <ecNumber evidence="5">3.2.2.19</ecNumber>
    </recommendedName>
    <alternativeName>
        <fullName evidence="3">Immunity protein Tri1</fullName>
        <shortName evidence="3">Tri1-Pp</shortName>
    </alternativeName>
</protein>
<dbReference type="EC" id="3.2.2.19" evidence="5"/>
<dbReference type="EMBL" id="CP000926">
    <property type="protein sequence ID" value="ABY98655.1"/>
    <property type="molecule type" value="Genomic_DNA"/>
</dbReference>
<dbReference type="RefSeq" id="WP_012272394.1">
    <property type="nucleotide sequence ID" value="NC_010322.1"/>
</dbReference>
<dbReference type="SMR" id="B0KTG8"/>
<dbReference type="KEGG" id="ppg:PputGB1_2761"/>
<dbReference type="eggNOG" id="COG1397">
    <property type="taxonomic scope" value="Bacteria"/>
</dbReference>
<dbReference type="HOGENOM" id="CLU_024566_8_4_6"/>
<dbReference type="Proteomes" id="UP000002157">
    <property type="component" value="Chromosome"/>
</dbReference>
<dbReference type="GO" id="GO:0003875">
    <property type="term" value="F:ADP-ribosylarginine hydrolase activity"/>
    <property type="evidence" value="ECO:0007669"/>
    <property type="project" value="UniProtKB-EC"/>
</dbReference>
<dbReference type="GO" id="GO:0046872">
    <property type="term" value="F:metal ion binding"/>
    <property type="evidence" value="ECO:0007669"/>
    <property type="project" value="UniProtKB-KW"/>
</dbReference>
<dbReference type="Gene3D" id="1.10.4080.10">
    <property type="entry name" value="ADP-ribosylation/Crystallin J1"/>
    <property type="match status" value="1"/>
</dbReference>
<dbReference type="InterPro" id="IPR050792">
    <property type="entry name" value="ADP-ribosylglycohydrolase"/>
</dbReference>
<dbReference type="InterPro" id="IPR005502">
    <property type="entry name" value="Ribosyl_crysJ1"/>
</dbReference>
<dbReference type="InterPro" id="IPR036705">
    <property type="entry name" value="Ribosyl_crysJ1_sf"/>
</dbReference>
<dbReference type="InterPro" id="IPR049650">
    <property type="entry name" value="Tri1-like"/>
</dbReference>
<dbReference type="NCBIfam" id="NF041672">
    <property type="entry name" value="ADPriboarghdlase"/>
    <property type="match status" value="1"/>
</dbReference>
<dbReference type="PANTHER" id="PTHR16222">
    <property type="entry name" value="ADP-RIBOSYLGLYCOHYDROLASE"/>
    <property type="match status" value="1"/>
</dbReference>
<dbReference type="PANTHER" id="PTHR16222:SF12">
    <property type="entry name" value="ADP-RIBOSYLGLYCOHYDROLASE-RELATED"/>
    <property type="match status" value="1"/>
</dbReference>
<dbReference type="Pfam" id="PF03747">
    <property type="entry name" value="ADP_ribosyl_GH"/>
    <property type="match status" value="1"/>
</dbReference>
<dbReference type="SUPFAM" id="SSF101478">
    <property type="entry name" value="ADP-ribosylglycohydrolase"/>
    <property type="match status" value="1"/>
</dbReference>
<comment type="function">
    <text evidence="2 5">Immunity component of an interbacterial competition system (also called effector-immunity systems). Expression in E.coli neutralizes the toxic effects of non-cognate S.proteamaculans effector protein Tre1 (Tre1-Sp); cannot be co-purified with Tre1-Sp from E.coli, suggesting they do not form a stable complex (PubMed:30343895). Probably acts as an arginine mono-ADP-ribosylhydrolase, mediating the removal of mono-ADP-ribose attached to arginine residues on proteins. Probably de-ADP-ribosylates FtsZ and possibly other proteins; the ability to hydrolyze ADP-ribosyl moieties is not essential for neutralization of its cognate toxin, strongly suggesting its N-terminal extension occludes the active site of cognate toxin Tre1 (Probable).</text>
</comment>
<comment type="catalytic activity">
    <reaction evidence="5">
        <text>N(omega)-(ADP-D-ribosyl)-L-arginyl-[protein] + H2O = ADP-D-ribose + L-arginyl-[protein]</text>
        <dbReference type="Rhea" id="RHEA:14885"/>
        <dbReference type="Rhea" id="RHEA-COMP:10532"/>
        <dbReference type="Rhea" id="RHEA-COMP:15087"/>
        <dbReference type="ChEBI" id="CHEBI:15377"/>
        <dbReference type="ChEBI" id="CHEBI:29965"/>
        <dbReference type="ChEBI" id="CHEBI:57967"/>
        <dbReference type="ChEBI" id="CHEBI:142554"/>
        <dbReference type="EC" id="3.2.2.19"/>
    </reaction>
</comment>
<comment type="cofactor">
    <cofactor evidence="1">
        <name>Mg(2+)</name>
        <dbReference type="ChEBI" id="CHEBI:18420"/>
    </cofactor>
    <text evidence="1">Binds 1 Mg(2+) ion per subunit.</text>
</comment>
<comment type="domain">
    <text evidence="5">The N-terminal extension probably forms a projection that reaches into the active site of cognate toxin Tre1-Pp where it occludes the active site.</text>
</comment>
<comment type="similarity">
    <text evidence="4">Belongs to the ADP-ribosylglycohydrolase family.</text>
</comment>
<name>TRI1_PSEPG</name>
<reference key="1">
    <citation type="submission" date="2008-01" db="EMBL/GenBank/DDBJ databases">
        <title>Complete sequence of Pseudomonas putida GB-1.</title>
        <authorList>
            <consortium name="US DOE Joint Genome Institute"/>
            <person name="Copeland A."/>
            <person name="Lucas S."/>
            <person name="Lapidus A."/>
            <person name="Barry K."/>
            <person name="Glavina del Rio T."/>
            <person name="Dalin E."/>
            <person name="Tice H."/>
            <person name="Pitluck S."/>
            <person name="Bruce D."/>
            <person name="Goodwin L."/>
            <person name="Chertkov O."/>
            <person name="Brettin T."/>
            <person name="Detter J.C."/>
            <person name="Han C."/>
            <person name="Kuske C.R."/>
            <person name="Schmutz J."/>
            <person name="Larimer F."/>
            <person name="Land M."/>
            <person name="Hauser L."/>
            <person name="Kyrpides N."/>
            <person name="Kim E."/>
            <person name="McCarthy J.K."/>
            <person name="Richardson P."/>
        </authorList>
    </citation>
    <scope>NUCLEOTIDE SEQUENCE [LARGE SCALE GENOMIC DNA]</scope>
    <source>
        <strain>GB-1</strain>
    </source>
</reference>
<reference key="2">
    <citation type="journal article" date="2018" name="Cell">
        <title>Bifunctional immunity proteins protect bacteria against FtsZ-targeting ADP-ribosylating toxins.</title>
        <authorList>
            <person name="Ting S.Y."/>
            <person name="Bosch D.E."/>
            <person name="Mangiameli S.M."/>
            <person name="Radey M.C."/>
            <person name="Huang S."/>
            <person name="Park Y.J."/>
            <person name="Kelly K.A."/>
            <person name="Filip S.K."/>
            <person name="Goo Y.A."/>
            <person name="Eng J.K."/>
            <person name="Allaire M."/>
            <person name="Veesler D."/>
            <person name="Wiggins P.A."/>
            <person name="Peterson S.B."/>
            <person name="Mougous J.D."/>
        </authorList>
    </citation>
    <scope>FUNCTION</scope>
    <scope>SUBSTRATE SPECIFICITY</scope>
    <scope>MUTAGENESIS OF ASP-157</scope>
    <source>
        <strain>GB-1</strain>
    </source>
</reference>
<organism>
    <name type="scientific">Pseudomonas putida (strain GB-1)</name>
    <dbReference type="NCBI Taxonomy" id="76869"/>
    <lineage>
        <taxon>Bacteria</taxon>
        <taxon>Pseudomonadati</taxon>
        <taxon>Pseudomonadota</taxon>
        <taxon>Gammaproteobacteria</taxon>
        <taxon>Pseudomonadales</taxon>
        <taxon>Pseudomonadaceae</taxon>
        <taxon>Pseudomonas</taxon>
    </lineage>
</organism>
<feature type="chain" id="PRO_0000446518" description="ADP-ribosylarginine hydrolase Tri1">
    <location>
        <begin position="1"/>
        <end position="371"/>
    </location>
</feature>
<feature type="region of interest" description="N-terminal extension" evidence="5">
    <location>
        <begin position="1"/>
        <end position="61"/>
    </location>
</feature>
<feature type="region of interest" description="ADP-ribosyl hydrolase domain" evidence="5">
    <location>
        <begin position="70"/>
        <end position="362"/>
    </location>
</feature>
<feature type="binding site" evidence="1">
    <location>
        <position position="112"/>
    </location>
    <ligand>
        <name>Mg(2+)</name>
        <dbReference type="ChEBI" id="CHEBI:18420"/>
    </ligand>
</feature>
<feature type="binding site" evidence="1">
    <location>
        <position position="113"/>
    </location>
    <ligand>
        <name>Mg(2+)</name>
        <dbReference type="ChEBI" id="CHEBI:18420"/>
    </ligand>
</feature>
<feature type="binding site" evidence="1">
    <location>
        <position position="114"/>
    </location>
    <ligand>
        <name>Mg(2+)</name>
        <dbReference type="ChEBI" id="CHEBI:18420"/>
    </ligand>
</feature>
<feature type="binding site" evidence="1">
    <location>
        <position position="157"/>
    </location>
    <ligand>
        <name>Mg(2+)</name>
        <dbReference type="ChEBI" id="CHEBI:18420"/>
    </ligand>
</feature>
<feature type="binding site" evidence="1">
    <location>
        <position position="313"/>
    </location>
    <ligand>
        <name>Mg(2+)</name>
        <dbReference type="ChEBI" id="CHEBI:18420"/>
    </ligand>
</feature>
<feature type="mutagenesis site" description="No longer protects E.coli against S.proteamaculans effector protein Tre1, no effect on growth in the absence of S.proteamaculans." evidence="2">
    <original>D</original>
    <variation>N</variation>
    <location>
        <position position="157"/>
    </location>
</feature>
<evidence type="ECO:0000250" key="1">
    <source>
        <dbReference type="UniProtKB" id="A8GG79"/>
    </source>
</evidence>
<evidence type="ECO:0000269" key="2">
    <source>
    </source>
</evidence>
<evidence type="ECO:0000303" key="3">
    <source>
    </source>
</evidence>
<evidence type="ECO:0000305" key="4"/>
<evidence type="ECO:0000305" key="5">
    <source>
    </source>
</evidence>